<accession>C0Q5E5</accession>
<dbReference type="EC" id="3.6.1.41" evidence="1"/>
<dbReference type="EMBL" id="CP000857">
    <property type="protein sequence ID" value="ACN44287.1"/>
    <property type="molecule type" value="Genomic_DNA"/>
</dbReference>
<dbReference type="RefSeq" id="WP_000257210.1">
    <property type="nucleotide sequence ID" value="NC_012125.1"/>
</dbReference>
<dbReference type="SMR" id="C0Q5E5"/>
<dbReference type="KEGG" id="sei:SPC_0095"/>
<dbReference type="HOGENOM" id="CLU_056184_2_0_6"/>
<dbReference type="Proteomes" id="UP000001599">
    <property type="component" value="Chromosome"/>
</dbReference>
<dbReference type="GO" id="GO:0008803">
    <property type="term" value="F:bis(5'-nucleosyl)-tetraphosphatase (symmetrical) activity"/>
    <property type="evidence" value="ECO:0007669"/>
    <property type="project" value="UniProtKB-UniRule"/>
</dbReference>
<dbReference type="CDD" id="cd07422">
    <property type="entry name" value="MPP_ApaH"/>
    <property type="match status" value="1"/>
</dbReference>
<dbReference type="FunFam" id="3.60.21.10:FF:000013">
    <property type="entry name" value="Bis(5'-nucleosyl)-tetraphosphatase, symmetrical"/>
    <property type="match status" value="1"/>
</dbReference>
<dbReference type="Gene3D" id="3.60.21.10">
    <property type="match status" value="1"/>
</dbReference>
<dbReference type="HAMAP" id="MF_00199">
    <property type="entry name" value="ApaH"/>
    <property type="match status" value="1"/>
</dbReference>
<dbReference type="InterPro" id="IPR004617">
    <property type="entry name" value="ApaH"/>
</dbReference>
<dbReference type="InterPro" id="IPR004843">
    <property type="entry name" value="Calcineurin-like_PHP_ApaH"/>
</dbReference>
<dbReference type="InterPro" id="IPR029052">
    <property type="entry name" value="Metallo-depent_PP-like"/>
</dbReference>
<dbReference type="NCBIfam" id="TIGR00668">
    <property type="entry name" value="apaH"/>
    <property type="match status" value="1"/>
</dbReference>
<dbReference type="NCBIfam" id="NF001204">
    <property type="entry name" value="PRK00166.1"/>
    <property type="match status" value="1"/>
</dbReference>
<dbReference type="PANTHER" id="PTHR40942">
    <property type="match status" value="1"/>
</dbReference>
<dbReference type="PANTHER" id="PTHR40942:SF4">
    <property type="entry name" value="CYTOCHROME C5"/>
    <property type="match status" value="1"/>
</dbReference>
<dbReference type="Pfam" id="PF00149">
    <property type="entry name" value="Metallophos"/>
    <property type="match status" value="1"/>
</dbReference>
<dbReference type="PIRSF" id="PIRSF000903">
    <property type="entry name" value="B5n-ttraPtase_sm"/>
    <property type="match status" value="1"/>
</dbReference>
<dbReference type="SUPFAM" id="SSF56300">
    <property type="entry name" value="Metallo-dependent phosphatases"/>
    <property type="match status" value="1"/>
</dbReference>
<keyword id="KW-0378">Hydrolase</keyword>
<reference key="1">
    <citation type="journal article" date="2009" name="PLoS ONE">
        <title>Salmonella paratyphi C: genetic divergence from Salmonella choleraesuis and pathogenic convergence with Salmonella typhi.</title>
        <authorList>
            <person name="Liu W.-Q."/>
            <person name="Feng Y."/>
            <person name="Wang Y."/>
            <person name="Zou Q.-H."/>
            <person name="Chen F."/>
            <person name="Guo J.-T."/>
            <person name="Peng Y.-H."/>
            <person name="Jin Y."/>
            <person name="Li Y.-G."/>
            <person name="Hu S.-N."/>
            <person name="Johnston R.N."/>
            <person name="Liu G.-R."/>
            <person name="Liu S.-L."/>
        </authorList>
    </citation>
    <scope>NUCLEOTIDE SEQUENCE [LARGE SCALE GENOMIC DNA]</scope>
    <source>
        <strain>RKS4594</strain>
    </source>
</reference>
<gene>
    <name evidence="1" type="primary">apaH</name>
    <name type="ordered locus">SPC_0095</name>
</gene>
<evidence type="ECO:0000255" key="1">
    <source>
        <dbReference type="HAMAP-Rule" id="MF_00199"/>
    </source>
</evidence>
<organism>
    <name type="scientific">Salmonella paratyphi C (strain RKS4594)</name>
    <dbReference type="NCBI Taxonomy" id="476213"/>
    <lineage>
        <taxon>Bacteria</taxon>
        <taxon>Pseudomonadati</taxon>
        <taxon>Pseudomonadota</taxon>
        <taxon>Gammaproteobacteria</taxon>
        <taxon>Enterobacterales</taxon>
        <taxon>Enterobacteriaceae</taxon>
        <taxon>Salmonella</taxon>
    </lineage>
</organism>
<feature type="chain" id="PRO_1000124454" description="Bis(5'-nucleosyl)-tetraphosphatase, symmetrical">
    <location>
        <begin position="1"/>
        <end position="282"/>
    </location>
</feature>
<protein>
    <recommendedName>
        <fullName evidence="1">Bis(5'-nucleosyl)-tetraphosphatase, symmetrical</fullName>
        <ecNumber evidence="1">3.6.1.41</ecNumber>
    </recommendedName>
    <alternativeName>
        <fullName evidence="1">Ap4A hydrolase</fullName>
    </alternativeName>
    <alternativeName>
        <fullName evidence="1">Diadenosine 5',5'''-P1,P4-tetraphosphate pyrophosphohydrolase</fullName>
    </alternativeName>
    <alternativeName>
        <fullName evidence="1">Diadenosine tetraphosphatase</fullName>
    </alternativeName>
</protein>
<proteinExistence type="inferred from homology"/>
<sequence length="282" mass="31430">MATYLIGDVHGCYDELIALLQQVEFTPDTDTLWLTGDLVARGPGSLDVLRYVKSLGNSVRLVLGNHDLHLLAVFAGISRNKPKDRLTPLLEAPDADELLNWLRRQPLLLVDEEKKLIMAHAGITPQWDLQTAKECARDVEAVLSSDSYPFFLDAMYGDMPNNWSPELSGLARLRFITNAFTRMRYCFPNGQLDMYSKASPENAPAPLKPWFAIPGPVSEAYSIAFGHWASLEGKGTPEGIYALDTGCCWGGELTCLRWEDKQYFVQPSNRQMDMGEGEAVNA</sequence>
<name>APAH_SALPC</name>
<comment type="function">
    <text evidence="1">Hydrolyzes diadenosine 5',5'''-P1,P4-tetraphosphate to yield ADP.</text>
</comment>
<comment type="catalytic activity">
    <reaction evidence="1">
        <text>P(1),P(4)-bis(5'-adenosyl) tetraphosphate + H2O = 2 ADP + 2 H(+)</text>
        <dbReference type="Rhea" id="RHEA:24252"/>
        <dbReference type="ChEBI" id="CHEBI:15377"/>
        <dbReference type="ChEBI" id="CHEBI:15378"/>
        <dbReference type="ChEBI" id="CHEBI:58141"/>
        <dbReference type="ChEBI" id="CHEBI:456216"/>
        <dbReference type="EC" id="3.6.1.41"/>
    </reaction>
</comment>
<comment type="similarity">
    <text evidence="1">Belongs to the Ap4A hydrolase family.</text>
</comment>